<protein>
    <recommendedName>
        <fullName>Sulfotransferase 1B1</fullName>
        <shortName>ST1B1</shortName>
        <ecNumber evidence="3">2.8.2.1</ecNumber>
    </recommendedName>
    <alternativeName>
        <fullName>DOPA/tyrosine sulfotransferase</fullName>
    </alternativeName>
    <alternativeName>
        <fullName>Sulfotransferase family cytosolic 1B member 1</fullName>
    </alternativeName>
</protein>
<dbReference type="EC" id="2.8.2.1" evidence="3"/>
<dbReference type="EMBL" id="U92076">
    <property type="protein sequence ID" value="AAD09249.1"/>
    <property type="molecule type" value="mRNA"/>
</dbReference>
<dbReference type="EMBL" id="AF022894">
    <property type="protein sequence ID" value="AAD01746.1"/>
    <property type="molecule type" value="mRNA"/>
</dbReference>
<dbReference type="EMBL" id="AK033498">
    <property type="protein sequence ID" value="BAC28321.1"/>
    <property type="molecule type" value="mRNA"/>
</dbReference>
<dbReference type="EMBL" id="AK087595">
    <property type="protein sequence ID" value="BAC39939.1"/>
    <property type="molecule type" value="mRNA"/>
</dbReference>
<dbReference type="EMBL" id="BC024361">
    <property type="protein sequence ID" value="AAH24361.1"/>
    <property type="molecule type" value="mRNA"/>
</dbReference>
<dbReference type="CCDS" id="CCDS19391.1">
    <molecule id="Q9QWG7-1"/>
</dbReference>
<dbReference type="PIR" id="JE0186">
    <property type="entry name" value="JE0186"/>
</dbReference>
<dbReference type="RefSeq" id="NP_001343872.1">
    <molecule id="Q9QWG7-1"/>
    <property type="nucleotide sequence ID" value="NM_001356943.1"/>
</dbReference>
<dbReference type="RefSeq" id="NP_001369766.1">
    <molecule id="Q9QWG7-1"/>
    <property type="nucleotide sequence ID" value="NM_001382837.1"/>
</dbReference>
<dbReference type="RefSeq" id="NP_063931.1">
    <molecule id="Q9QWG7-1"/>
    <property type="nucleotide sequence ID" value="NM_019878.4"/>
</dbReference>
<dbReference type="RefSeq" id="XP_006535213.1">
    <property type="nucleotide sequence ID" value="XM_006535150.2"/>
</dbReference>
<dbReference type="RefSeq" id="XP_006535214.1">
    <property type="nucleotide sequence ID" value="XM_006535151.1"/>
</dbReference>
<dbReference type="RefSeq" id="XP_006535215.1">
    <molecule id="Q9QWG7-1"/>
    <property type="nucleotide sequence ID" value="XM_006535152.4"/>
</dbReference>
<dbReference type="SMR" id="Q9QWG7"/>
<dbReference type="FunCoup" id="Q9QWG7">
    <property type="interactions" value="463"/>
</dbReference>
<dbReference type="STRING" id="10090.ENSMUSP00000112679"/>
<dbReference type="iPTMnet" id="Q9QWG7"/>
<dbReference type="PhosphoSitePlus" id="Q9QWG7"/>
<dbReference type="jPOST" id="Q9QWG7"/>
<dbReference type="PaxDb" id="10090-ENSMUSP00000031199"/>
<dbReference type="PeptideAtlas" id="Q9QWG7"/>
<dbReference type="ProteomicsDB" id="257426">
    <molecule id="Q9QWG7-1"/>
</dbReference>
<dbReference type="ProteomicsDB" id="257427">
    <molecule id="Q9QWG7-2"/>
</dbReference>
<dbReference type="Antibodypedia" id="951">
    <property type="antibodies" value="214 antibodies from 25 providers"/>
</dbReference>
<dbReference type="DNASU" id="56362"/>
<dbReference type="Ensembl" id="ENSMUST00000031199.11">
    <molecule id="Q9QWG7-1"/>
    <property type="protein sequence ID" value="ENSMUSP00000031199.5"/>
    <property type="gene ID" value="ENSMUSG00000029269.12"/>
</dbReference>
<dbReference type="Ensembl" id="ENSMUST00000117455.8">
    <molecule id="Q9QWG7-1"/>
    <property type="protein sequence ID" value="ENSMUSP00000112679.2"/>
    <property type="gene ID" value="ENSMUSG00000029269.12"/>
</dbReference>
<dbReference type="Ensembl" id="ENSMUST00000120150.2">
    <molecule id="Q9QWG7-1"/>
    <property type="protein sequence ID" value="ENSMUSP00000112844.2"/>
    <property type="gene ID" value="ENSMUSG00000029269.12"/>
</dbReference>
<dbReference type="GeneID" id="56362"/>
<dbReference type="KEGG" id="mmu:56362"/>
<dbReference type="UCSC" id="uc008xym.1">
    <molecule id="Q9QWG7-1"/>
    <property type="organism name" value="mouse"/>
</dbReference>
<dbReference type="AGR" id="MGI:2136282"/>
<dbReference type="CTD" id="27284"/>
<dbReference type="MGI" id="MGI:2136282">
    <property type="gene designation" value="Sult1b1"/>
</dbReference>
<dbReference type="VEuPathDB" id="HostDB:ENSMUSG00000029269"/>
<dbReference type="eggNOG" id="KOG1584">
    <property type="taxonomic scope" value="Eukaryota"/>
</dbReference>
<dbReference type="GeneTree" id="ENSGT00940000161848"/>
<dbReference type="HOGENOM" id="CLU_027239_1_2_1"/>
<dbReference type="InParanoid" id="Q9QWG7"/>
<dbReference type="OMA" id="IIYLCRE"/>
<dbReference type="OrthoDB" id="205623at2759"/>
<dbReference type="PhylomeDB" id="Q9QWG7"/>
<dbReference type="TreeFam" id="TF321745"/>
<dbReference type="BRENDA" id="2.8.2.1">
    <property type="organism ID" value="3474"/>
</dbReference>
<dbReference type="Reactome" id="R-MMU-156584">
    <property type="pathway name" value="Cytosolic sulfonation of small molecules"/>
</dbReference>
<dbReference type="BioGRID-ORCS" id="56362">
    <property type="hits" value="1 hit in 77 CRISPR screens"/>
</dbReference>
<dbReference type="PRO" id="PR:Q9QWG7"/>
<dbReference type="Proteomes" id="UP000000589">
    <property type="component" value="Chromosome 5"/>
</dbReference>
<dbReference type="RNAct" id="Q9QWG7">
    <property type="molecule type" value="protein"/>
</dbReference>
<dbReference type="Bgee" id="ENSMUSG00000029269">
    <property type="expression patterns" value="Expressed in small intestine Peyer's patch and 48 other cell types or tissues"/>
</dbReference>
<dbReference type="GO" id="GO:0005829">
    <property type="term" value="C:cytosol"/>
    <property type="evidence" value="ECO:0000304"/>
    <property type="project" value="MGI"/>
</dbReference>
<dbReference type="GO" id="GO:0004062">
    <property type="term" value="F:aryl sulfotransferase activity"/>
    <property type="evidence" value="ECO:0000314"/>
    <property type="project" value="UniProtKB"/>
</dbReference>
<dbReference type="GO" id="GO:0008146">
    <property type="term" value="F:sulfotransferase activity"/>
    <property type="evidence" value="ECO:0000314"/>
    <property type="project" value="MGI"/>
</dbReference>
<dbReference type="GO" id="GO:0050427">
    <property type="term" value="P:3'-phosphoadenosine 5'-phosphosulfate metabolic process"/>
    <property type="evidence" value="ECO:0007669"/>
    <property type="project" value="Ensembl"/>
</dbReference>
<dbReference type="GO" id="GO:0030855">
    <property type="term" value="P:epithelial cell differentiation"/>
    <property type="evidence" value="ECO:0007669"/>
    <property type="project" value="Ensembl"/>
</dbReference>
<dbReference type="GO" id="GO:0006068">
    <property type="term" value="P:ethanol catabolic process"/>
    <property type="evidence" value="ECO:0007669"/>
    <property type="project" value="Ensembl"/>
</dbReference>
<dbReference type="GO" id="GO:0009812">
    <property type="term" value="P:flavonoid metabolic process"/>
    <property type="evidence" value="ECO:0007669"/>
    <property type="project" value="Ensembl"/>
</dbReference>
<dbReference type="GO" id="GO:0051923">
    <property type="term" value="P:sulfation"/>
    <property type="evidence" value="ECO:0000314"/>
    <property type="project" value="UniProtKB"/>
</dbReference>
<dbReference type="GO" id="GO:0042403">
    <property type="term" value="P:thyroid hormone metabolic process"/>
    <property type="evidence" value="ECO:0000314"/>
    <property type="project" value="UniProtKB"/>
</dbReference>
<dbReference type="GO" id="GO:0006805">
    <property type="term" value="P:xenobiotic metabolic process"/>
    <property type="evidence" value="ECO:0007669"/>
    <property type="project" value="Ensembl"/>
</dbReference>
<dbReference type="FunFam" id="3.40.50.300:FF:000433">
    <property type="entry name" value="Estrogen sulfotransferase"/>
    <property type="match status" value="1"/>
</dbReference>
<dbReference type="Gene3D" id="3.40.50.300">
    <property type="entry name" value="P-loop containing nucleotide triphosphate hydrolases"/>
    <property type="match status" value="1"/>
</dbReference>
<dbReference type="InterPro" id="IPR027417">
    <property type="entry name" value="P-loop_NTPase"/>
</dbReference>
<dbReference type="InterPro" id="IPR000863">
    <property type="entry name" value="Sulfotransferase_dom"/>
</dbReference>
<dbReference type="PANTHER" id="PTHR11783">
    <property type="entry name" value="SULFOTRANSFERASE SULT"/>
    <property type="match status" value="1"/>
</dbReference>
<dbReference type="Pfam" id="PF00685">
    <property type="entry name" value="Sulfotransfer_1"/>
    <property type="match status" value="1"/>
</dbReference>
<dbReference type="SUPFAM" id="SSF52540">
    <property type="entry name" value="P-loop containing nucleoside triphosphate hydrolases"/>
    <property type="match status" value="1"/>
</dbReference>
<organism>
    <name type="scientific">Mus musculus</name>
    <name type="common">Mouse</name>
    <dbReference type="NCBI Taxonomy" id="10090"/>
    <lineage>
        <taxon>Eukaryota</taxon>
        <taxon>Metazoa</taxon>
        <taxon>Chordata</taxon>
        <taxon>Craniata</taxon>
        <taxon>Vertebrata</taxon>
        <taxon>Euteleostomi</taxon>
        <taxon>Mammalia</taxon>
        <taxon>Eutheria</taxon>
        <taxon>Euarchontoglires</taxon>
        <taxon>Glires</taxon>
        <taxon>Rodentia</taxon>
        <taxon>Myomorpha</taxon>
        <taxon>Muroidea</taxon>
        <taxon>Muridae</taxon>
        <taxon>Murinae</taxon>
        <taxon>Mus</taxon>
        <taxon>Mus</taxon>
    </lineage>
</organism>
<keyword id="KW-0025">Alternative splicing</keyword>
<keyword id="KW-0963">Cytoplasm</keyword>
<keyword id="KW-1185">Reference proteome</keyword>
<keyword id="KW-0808">Transferase</keyword>
<reference key="1">
    <citation type="journal article" date="1998" name="J. Biochem.">
        <title>Molecular cloning, expression, and characterization of a novel mouse liver SULT1B1 sulfotransferase.</title>
        <authorList>
            <person name="Saeki Y."/>
            <person name="Sakakibara Y."/>
            <person name="Araki Y."/>
            <person name="Yanagisawa K."/>
            <person name="Suiko M."/>
            <person name="Nakajima H."/>
            <person name="Liu M.-C."/>
        </authorList>
    </citation>
    <scope>NUCLEOTIDE SEQUENCE [MRNA] (ISOFORM 1)</scope>
    <scope>FUNCTION</scope>
    <scope>TISSUE SPECIFICITY</scope>
    <scope>DEVELOPMENTAL STAGE</scope>
    <scope>CATALYTIC ACTIVITY</scope>
    <source>
        <strain>C57BL/6 X CBA</strain>
        <tissue>Liver</tissue>
    </source>
</reference>
<reference key="2">
    <citation type="journal article" date="2005" name="Science">
        <title>The transcriptional landscape of the mammalian genome.</title>
        <authorList>
            <person name="Carninci P."/>
            <person name="Kasukawa T."/>
            <person name="Katayama S."/>
            <person name="Gough J."/>
            <person name="Frith M.C."/>
            <person name="Maeda N."/>
            <person name="Oyama R."/>
            <person name="Ravasi T."/>
            <person name="Lenhard B."/>
            <person name="Wells C."/>
            <person name="Kodzius R."/>
            <person name="Shimokawa K."/>
            <person name="Bajic V.B."/>
            <person name="Brenner S.E."/>
            <person name="Batalov S."/>
            <person name="Forrest A.R."/>
            <person name="Zavolan M."/>
            <person name="Davis M.J."/>
            <person name="Wilming L.G."/>
            <person name="Aidinis V."/>
            <person name="Allen J.E."/>
            <person name="Ambesi-Impiombato A."/>
            <person name="Apweiler R."/>
            <person name="Aturaliya R.N."/>
            <person name="Bailey T.L."/>
            <person name="Bansal M."/>
            <person name="Baxter L."/>
            <person name="Beisel K.W."/>
            <person name="Bersano T."/>
            <person name="Bono H."/>
            <person name="Chalk A.M."/>
            <person name="Chiu K.P."/>
            <person name="Choudhary V."/>
            <person name="Christoffels A."/>
            <person name="Clutterbuck D.R."/>
            <person name="Crowe M.L."/>
            <person name="Dalla E."/>
            <person name="Dalrymple B.P."/>
            <person name="de Bono B."/>
            <person name="Della Gatta G."/>
            <person name="di Bernardo D."/>
            <person name="Down T."/>
            <person name="Engstrom P."/>
            <person name="Fagiolini M."/>
            <person name="Faulkner G."/>
            <person name="Fletcher C.F."/>
            <person name="Fukushima T."/>
            <person name="Furuno M."/>
            <person name="Futaki S."/>
            <person name="Gariboldi M."/>
            <person name="Georgii-Hemming P."/>
            <person name="Gingeras T.R."/>
            <person name="Gojobori T."/>
            <person name="Green R.E."/>
            <person name="Gustincich S."/>
            <person name="Harbers M."/>
            <person name="Hayashi Y."/>
            <person name="Hensch T.K."/>
            <person name="Hirokawa N."/>
            <person name="Hill D."/>
            <person name="Huminiecki L."/>
            <person name="Iacono M."/>
            <person name="Ikeo K."/>
            <person name="Iwama A."/>
            <person name="Ishikawa T."/>
            <person name="Jakt M."/>
            <person name="Kanapin A."/>
            <person name="Katoh M."/>
            <person name="Kawasawa Y."/>
            <person name="Kelso J."/>
            <person name="Kitamura H."/>
            <person name="Kitano H."/>
            <person name="Kollias G."/>
            <person name="Krishnan S.P."/>
            <person name="Kruger A."/>
            <person name="Kummerfeld S.K."/>
            <person name="Kurochkin I.V."/>
            <person name="Lareau L.F."/>
            <person name="Lazarevic D."/>
            <person name="Lipovich L."/>
            <person name="Liu J."/>
            <person name="Liuni S."/>
            <person name="McWilliam S."/>
            <person name="Madan Babu M."/>
            <person name="Madera M."/>
            <person name="Marchionni L."/>
            <person name="Matsuda H."/>
            <person name="Matsuzawa S."/>
            <person name="Miki H."/>
            <person name="Mignone F."/>
            <person name="Miyake S."/>
            <person name="Morris K."/>
            <person name="Mottagui-Tabar S."/>
            <person name="Mulder N."/>
            <person name="Nakano N."/>
            <person name="Nakauchi H."/>
            <person name="Ng P."/>
            <person name="Nilsson R."/>
            <person name="Nishiguchi S."/>
            <person name="Nishikawa S."/>
            <person name="Nori F."/>
            <person name="Ohara O."/>
            <person name="Okazaki Y."/>
            <person name="Orlando V."/>
            <person name="Pang K.C."/>
            <person name="Pavan W.J."/>
            <person name="Pavesi G."/>
            <person name="Pesole G."/>
            <person name="Petrovsky N."/>
            <person name="Piazza S."/>
            <person name="Reed J."/>
            <person name="Reid J.F."/>
            <person name="Ring B.Z."/>
            <person name="Ringwald M."/>
            <person name="Rost B."/>
            <person name="Ruan Y."/>
            <person name="Salzberg S.L."/>
            <person name="Sandelin A."/>
            <person name="Schneider C."/>
            <person name="Schoenbach C."/>
            <person name="Sekiguchi K."/>
            <person name="Semple C.A."/>
            <person name="Seno S."/>
            <person name="Sessa L."/>
            <person name="Sheng Y."/>
            <person name="Shibata Y."/>
            <person name="Shimada H."/>
            <person name="Shimada K."/>
            <person name="Silva D."/>
            <person name="Sinclair B."/>
            <person name="Sperling S."/>
            <person name="Stupka E."/>
            <person name="Sugiura K."/>
            <person name="Sultana R."/>
            <person name="Takenaka Y."/>
            <person name="Taki K."/>
            <person name="Tammoja K."/>
            <person name="Tan S.L."/>
            <person name="Tang S."/>
            <person name="Taylor M.S."/>
            <person name="Tegner J."/>
            <person name="Teichmann S.A."/>
            <person name="Ueda H.R."/>
            <person name="van Nimwegen E."/>
            <person name="Verardo R."/>
            <person name="Wei C.L."/>
            <person name="Yagi K."/>
            <person name="Yamanishi H."/>
            <person name="Zabarovsky E."/>
            <person name="Zhu S."/>
            <person name="Zimmer A."/>
            <person name="Hide W."/>
            <person name="Bult C."/>
            <person name="Grimmond S.M."/>
            <person name="Teasdale R.D."/>
            <person name="Liu E.T."/>
            <person name="Brusic V."/>
            <person name="Quackenbush J."/>
            <person name="Wahlestedt C."/>
            <person name="Mattick J.S."/>
            <person name="Hume D.A."/>
            <person name="Kai C."/>
            <person name="Sasaki D."/>
            <person name="Tomaru Y."/>
            <person name="Fukuda S."/>
            <person name="Kanamori-Katayama M."/>
            <person name="Suzuki M."/>
            <person name="Aoki J."/>
            <person name="Arakawa T."/>
            <person name="Iida J."/>
            <person name="Imamura K."/>
            <person name="Itoh M."/>
            <person name="Kato T."/>
            <person name="Kawaji H."/>
            <person name="Kawagashira N."/>
            <person name="Kawashima T."/>
            <person name="Kojima M."/>
            <person name="Kondo S."/>
            <person name="Konno H."/>
            <person name="Nakano K."/>
            <person name="Ninomiya N."/>
            <person name="Nishio T."/>
            <person name="Okada M."/>
            <person name="Plessy C."/>
            <person name="Shibata K."/>
            <person name="Shiraki T."/>
            <person name="Suzuki S."/>
            <person name="Tagami M."/>
            <person name="Waki K."/>
            <person name="Watahiki A."/>
            <person name="Okamura-Oho Y."/>
            <person name="Suzuki H."/>
            <person name="Kawai J."/>
            <person name="Hayashizaki Y."/>
        </authorList>
    </citation>
    <scope>NUCLEOTIDE SEQUENCE [LARGE SCALE MRNA] (ISOFORMS 1 AND 2)</scope>
    <source>
        <strain>C57BL/6J</strain>
        <tissue>Oviduct</tissue>
    </source>
</reference>
<reference key="3">
    <citation type="journal article" date="2004" name="Genome Res.">
        <title>The status, quality, and expansion of the NIH full-length cDNA project: the Mammalian Gene Collection (MGC).</title>
        <authorList>
            <consortium name="The MGC Project Team"/>
        </authorList>
    </citation>
    <scope>NUCLEOTIDE SEQUENCE [LARGE SCALE MRNA] (ISOFORM 1)</scope>
    <source>
        <strain>FVB/N</strain>
        <tissue>Colon</tissue>
    </source>
</reference>
<reference key="4">
    <citation type="journal article" date="2010" name="Cell">
        <title>A tissue-specific atlas of mouse protein phosphorylation and expression.</title>
        <authorList>
            <person name="Huttlin E.L."/>
            <person name="Jedrychowski M.P."/>
            <person name="Elias J.E."/>
            <person name="Goswami T."/>
            <person name="Rad R."/>
            <person name="Beausoleil S.A."/>
            <person name="Villen J."/>
            <person name="Haas W."/>
            <person name="Sowa M.E."/>
            <person name="Gygi S.P."/>
        </authorList>
    </citation>
    <scope>IDENTIFICATION BY MASS SPECTROMETRY [LARGE SCALE ANALYSIS]</scope>
    <source>
        <tissue>Kidney</tissue>
    </source>
</reference>
<gene>
    <name evidence="7" type="primary">Sult1b1</name>
</gene>
<comment type="function">
    <text evidence="2 3">Sulfotransferase that utilizes 3'-phospho-5'-adenylyl sulfate (PAPS) as sulfonate donor to catalyze the sulfate conjugation of dopamine, small phenols such as 1-naphthol and p-nitrophenol and thyroid hormones, including 3,3'-diiodothyronine, triidothyronine (T3) and reverse triiodothyronine (rT3) (PubMed:9644246). May play a role in gut microbiota-host metabolic interaction. O-sulfonates 4-ethylphenol (4-EP), a dietary tyrosine-derived metabolite produced by gut bacteria. The product 4-EPS crosses the blood-brain barrier and may negatively regulate oligodendrocyte maturation and myelination, affecting the functional connectivity of different brain regions associated with the limbic system (By similarity).</text>
</comment>
<comment type="catalytic activity">
    <reaction evidence="3">
        <text>a phenol + 3'-phosphoadenylyl sulfate = an aryl sulfate + adenosine 3',5'-bisphosphate + H(+)</text>
        <dbReference type="Rhea" id="RHEA:12164"/>
        <dbReference type="ChEBI" id="CHEBI:15378"/>
        <dbReference type="ChEBI" id="CHEBI:33853"/>
        <dbReference type="ChEBI" id="CHEBI:58339"/>
        <dbReference type="ChEBI" id="CHEBI:58343"/>
        <dbReference type="ChEBI" id="CHEBI:140317"/>
        <dbReference type="EC" id="2.8.2.1"/>
    </reaction>
    <physiologicalReaction direction="left-to-right" evidence="6">
        <dbReference type="Rhea" id="RHEA:12165"/>
    </physiologicalReaction>
</comment>
<comment type="catalytic activity">
    <reaction evidence="3">
        <text>3,3',5-triiodo-L-thyronine + 3'-phosphoadenylyl sulfate = 3,3',5-triiodo-L-thyronine sulfate + adenosine 3',5'-bisphosphate + H(+)</text>
        <dbReference type="Rhea" id="RHEA:67876"/>
        <dbReference type="ChEBI" id="CHEBI:15378"/>
        <dbReference type="ChEBI" id="CHEBI:58339"/>
        <dbReference type="ChEBI" id="CHEBI:58343"/>
        <dbReference type="ChEBI" id="CHEBI:176511"/>
        <dbReference type="ChEBI" id="CHEBI:533015"/>
    </reaction>
    <physiologicalReaction direction="left-to-right" evidence="6">
        <dbReference type="Rhea" id="RHEA:67877"/>
    </physiologicalReaction>
</comment>
<comment type="catalytic activity">
    <reaction evidence="2">
        <text>3,3',5'-triiodo-L-thyronine + 3'-phosphoadenylyl sulfate = 3,3',5'-triiodo-L-thyronine sulfate + adenosine 3',5'-bisphosphate + H(+)</text>
        <dbReference type="Rhea" id="RHEA:67888"/>
        <dbReference type="ChEBI" id="CHEBI:15378"/>
        <dbReference type="ChEBI" id="CHEBI:57261"/>
        <dbReference type="ChEBI" id="CHEBI:58339"/>
        <dbReference type="ChEBI" id="CHEBI:58343"/>
        <dbReference type="ChEBI" id="CHEBI:176513"/>
    </reaction>
    <physiologicalReaction direction="left-to-right" evidence="2">
        <dbReference type="Rhea" id="RHEA:67889"/>
    </physiologicalReaction>
</comment>
<comment type="catalytic activity">
    <reaction evidence="2">
        <text>3,3'-diiodo-L-thyronine + 3'-phosphoadenylyl sulfate = 3,3'-diiodo-L-thyronine sulfate + adenosine 3',5'-bisphosphate + H(+)</text>
        <dbReference type="Rhea" id="RHEA:67892"/>
        <dbReference type="ChEBI" id="CHEBI:15378"/>
        <dbReference type="ChEBI" id="CHEBI:58339"/>
        <dbReference type="ChEBI" id="CHEBI:58343"/>
        <dbReference type="ChEBI" id="CHEBI:176514"/>
        <dbReference type="ChEBI" id="CHEBI:176515"/>
    </reaction>
    <physiologicalReaction direction="left-to-right" evidence="2">
        <dbReference type="Rhea" id="RHEA:67893"/>
    </physiologicalReaction>
</comment>
<comment type="catalytic activity">
    <reaction evidence="3">
        <text>dopamine + 3'-phosphoadenylyl sulfate = dopamine 3-O-sulfate + adenosine 3',5'-bisphosphate + H(+)</text>
        <dbReference type="Rhea" id="RHEA:67880"/>
        <dbReference type="ChEBI" id="CHEBI:15378"/>
        <dbReference type="ChEBI" id="CHEBI:58339"/>
        <dbReference type="ChEBI" id="CHEBI:58343"/>
        <dbReference type="ChEBI" id="CHEBI:59905"/>
        <dbReference type="ChEBI" id="CHEBI:133524"/>
    </reaction>
    <physiologicalReaction direction="left-to-right" evidence="6">
        <dbReference type="Rhea" id="RHEA:67881"/>
    </physiologicalReaction>
</comment>
<comment type="catalytic activity">
    <reaction evidence="3">
        <text>dopamine + 3'-phosphoadenylyl sulfate = dopamine 4-O-sulfate + adenosine 3',5'-bisphosphate + H(+)</text>
        <dbReference type="Rhea" id="RHEA:67884"/>
        <dbReference type="ChEBI" id="CHEBI:15378"/>
        <dbReference type="ChEBI" id="CHEBI:58339"/>
        <dbReference type="ChEBI" id="CHEBI:58343"/>
        <dbReference type="ChEBI" id="CHEBI:59905"/>
        <dbReference type="ChEBI" id="CHEBI:133529"/>
    </reaction>
    <physiologicalReaction direction="left-to-right" evidence="6">
        <dbReference type="Rhea" id="RHEA:67885"/>
    </physiologicalReaction>
</comment>
<comment type="catalytic activity">
    <reaction evidence="2">
        <text>4-ethylphenol + 3'-phosphoadenylyl sulfate = 4-ethylphenyl sulfate + adenosine 3',5'-bisphosphate + H(+)</text>
        <dbReference type="Rhea" id="RHEA:70607"/>
        <dbReference type="ChEBI" id="CHEBI:15378"/>
        <dbReference type="ChEBI" id="CHEBI:49584"/>
        <dbReference type="ChEBI" id="CHEBI:58339"/>
        <dbReference type="ChEBI" id="CHEBI:58343"/>
        <dbReference type="ChEBI" id="CHEBI:133681"/>
    </reaction>
    <physiologicalReaction direction="left-to-right" evidence="2">
        <dbReference type="Rhea" id="RHEA:70608"/>
    </physiologicalReaction>
</comment>
<comment type="subcellular location">
    <subcellularLocation>
        <location evidence="2">Cytoplasm</location>
    </subcellularLocation>
</comment>
<comment type="alternative products">
    <event type="alternative splicing"/>
    <isoform>
        <id>Q9QWG7-1</id>
        <name>1</name>
        <sequence type="displayed"/>
    </isoform>
    <isoform>
        <id>Q9QWG7-2</id>
        <name>2</name>
        <sequence type="described" ref="VSP_012509"/>
    </isoform>
</comment>
<comment type="tissue specificity">
    <text evidence="3">Liver specific.</text>
</comment>
<comment type="developmental stage">
    <text evidence="3">Expression was detected at very low level in liver from 1 day-old and then gradually increased to the maximum level at 4 weeks old.</text>
</comment>
<comment type="similarity">
    <text evidence="5">Belongs to the sulfotransferase 1 family.</text>
</comment>
<sequence>MSASEDVWRKDLKMIHGYPMIYAFALNWERIEEFQSTPGDIVITTYPKSGTTWLSEIVDMVLNDGNVEKCKRDVITSKVPMLELSVPGIRISGVELLKKTPSPRIIKTHLPIDLLPKSFWENKCKMIYLARNGKDVAVSYYHFDLMNSINPLPGTWEEYLEKFLAGNVAYGSWFDHVKSWWEKREEHPLLYLYYEELKQNPKKEIKKIASFLDKTLDEEALDRIVHHTSFEMMKENPLVNYTHLPTAMMDHSKSPFMRKGIVGDWKNYFTMTQTEQFDAVYKKKMSGTTLEFCTDIQSA</sequence>
<feature type="chain" id="PRO_0000085162" description="Sulfotransferase 1B1">
    <location>
        <begin position="1"/>
        <end position="299"/>
    </location>
</feature>
<feature type="active site" description="Proton acceptor" evidence="1">
    <location>
        <position position="109"/>
    </location>
</feature>
<feature type="binding site" evidence="2">
    <location>
        <begin position="48"/>
        <end position="53"/>
    </location>
    <ligand>
        <name>3'-phosphoadenylyl sulfate</name>
        <dbReference type="ChEBI" id="CHEBI:58339"/>
    </ligand>
</feature>
<feature type="binding site" evidence="1">
    <location>
        <begin position="107"/>
        <end position="109"/>
    </location>
    <ligand>
        <name>substrate</name>
    </ligand>
</feature>
<feature type="binding site" evidence="2">
    <location>
        <position position="131"/>
    </location>
    <ligand>
        <name>3'-phosphoadenylyl sulfate</name>
        <dbReference type="ChEBI" id="CHEBI:58339"/>
    </ligand>
</feature>
<feature type="binding site" evidence="2">
    <location>
        <position position="139"/>
    </location>
    <ligand>
        <name>3'-phosphoadenylyl sulfate</name>
        <dbReference type="ChEBI" id="CHEBI:58339"/>
    </ligand>
</feature>
<feature type="binding site" evidence="2">
    <location>
        <position position="194"/>
    </location>
    <ligand>
        <name>3'-phosphoadenylyl sulfate</name>
        <dbReference type="ChEBI" id="CHEBI:58339"/>
    </ligand>
</feature>
<feature type="binding site" evidence="2">
    <location>
        <begin position="228"/>
        <end position="233"/>
    </location>
    <ligand>
        <name>3'-phosphoadenylyl sulfate</name>
        <dbReference type="ChEBI" id="CHEBI:58339"/>
    </ligand>
</feature>
<feature type="binding site" evidence="2">
    <location>
        <begin position="258"/>
        <end position="260"/>
    </location>
    <ligand>
        <name>3'-phosphoadenylyl sulfate</name>
        <dbReference type="ChEBI" id="CHEBI:58339"/>
    </ligand>
</feature>
<feature type="splice variant" id="VSP_012509" description="In isoform 2." evidence="4">
    <original>A</original>
    <variation>ALNFTNFEIIIGFSLKFS</variation>
    <location>
        <position position="299"/>
    </location>
</feature>
<feature type="sequence conflict" description="In Ref. 2; BAC39939." evidence="5" ref="2">
    <original>S</original>
    <variation>T</variation>
    <location>
        <position position="55"/>
    </location>
</feature>
<feature type="sequence conflict" description="In Ref. 1; AAD09249." evidence="5" ref="1">
    <original>A</original>
    <variation>P</variation>
    <location>
        <position position="137"/>
    </location>
</feature>
<feature type="sequence conflict" description="In Ref. 2; BAC39939." evidence="5" ref="2">
    <original>E</original>
    <variation>K</variation>
    <location>
        <position position="275"/>
    </location>
</feature>
<proteinExistence type="evidence at protein level"/>
<accession>Q9QWG7</accession>
<accession>Q8C301</accession>
<accession>Q9Z2T0</accession>
<evidence type="ECO:0000250" key="1"/>
<evidence type="ECO:0000250" key="2">
    <source>
        <dbReference type="UniProtKB" id="O43704"/>
    </source>
</evidence>
<evidence type="ECO:0000269" key="3">
    <source>
    </source>
</evidence>
<evidence type="ECO:0000303" key="4">
    <source>
    </source>
</evidence>
<evidence type="ECO:0000305" key="5"/>
<evidence type="ECO:0000305" key="6">
    <source>
    </source>
</evidence>
<evidence type="ECO:0000312" key="7">
    <source>
        <dbReference type="MGI" id="MGI:2136282"/>
    </source>
</evidence>
<name>ST1B1_MOUSE</name>